<evidence type="ECO:0000255" key="1">
    <source>
        <dbReference type="HAMAP-Rule" id="MF_00458"/>
    </source>
</evidence>
<geneLocation type="chloroplast"/>
<comment type="function">
    <text>PsaA and PsaB bind P700, the primary electron donor of photosystem I (PSI), as well as the electron acceptors A0, A1 and FX. PSI is a plastocyanin/cytochrome c6-ferredoxin oxidoreductase, converting photonic excitation into a charge separation, which transfers an electron from the donor P700 chlorophyll pair to the spectroscopically characterized acceptors A0, A1, FX, FA and FB in turn. Oxidized P700 is reduced on the lumenal side of the thylakoid membrane by plastocyanin or cytochrome c6.</text>
</comment>
<comment type="catalytic activity">
    <reaction evidence="1">
        <text>reduced [plastocyanin] + hnu + oxidized [2Fe-2S]-[ferredoxin] = oxidized [plastocyanin] + reduced [2Fe-2S]-[ferredoxin]</text>
        <dbReference type="Rhea" id="RHEA:30407"/>
        <dbReference type="Rhea" id="RHEA-COMP:10000"/>
        <dbReference type="Rhea" id="RHEA-COMP:10001"/>
        <dbReference type="Rhea" id="RHEA-COMP:10039"/>
        <dbReference type="Rhea" id="RHEA-COMP:10040"/>
        <dbReference type="ChEBI" id="CHEBI:29036"/>
        <dbReference type="ChEBI" id="CHEBI:30212"/>
        <dbReference type="ChEBI" id="CHEBI:33737"/>
        <dbReference type="ChEBI" id="CHEBI:33738"/>
        <dbReference type="ChEBI" id="CHEBI:49552"/>
        <dbReference type="EC" id="1.97.1.12"/>
    </reaction>
</comment>
<comment type="cofactor">
    <text evidence="1">P700 is a chlorophyll a/chlorophyll a' dimer, A0 is one or more chlorophyll a, A1 is one or both phylloquinones and FX is a shared 4Fe-4S iron-sulfur center.</text>
</comment>
<comment type="subunit">
    <text evidence="1">The PsaA/B heterodimer binds the P700 chlorophyll special pair and subsequent electron acceptors. PSI consists of a core antenna complex that captures photons, and an electron transfer chain that converts photonic excitation into a charge separation. The eukaryotic PSI reaction center is composed of at least 11 subunits.</text>
</comment>
<comment type="subcellular location">
    <subcellularLocation>
        <location evidence="1">Plastid</location>
        <location evidence="1">Chloroplast thylakoid membrane</location>
        <topology evidence="1">Multi-pass membrane protein</topology>
    </subcellularLocation>
</comment>
<comment type="similarity">
    <text evidence="1">Belongs to the PsaA/PsaB family.</text>
</comment>
<protein>
    <recommendedName>
        <fullName evidence="1">Photosystem I P700 chlorophyll a apoprotein A1</fullName>
        <ecNumber evidence="1">1.97.1.12</ecNumber>
    </recommendedName>
    <alternativeName>
        <fullName evidence="1">PSI-A</fullName>
    </alternativeName>
    <alternativeName>
        <fullName evidence="1">PsaA</fullName>
    </alternativeName>
</protein>
<organism>
    <name type="scientific">Trieres chinensis</name>
    <name type="common">Marine centric diatom</name>
    <name type="synonym">Odontella sinensis</name>
    <dbReference type="NCBI Taxonomy" id="1514140"/>
    <lineage>
        <taxon>Eukaryota</taxon>
        <taxon>Sar</taxon>
        <taxon>Stramenopiles</taxon>
        <taxon>Ochrophyta</taxon>
        <taxon>Bacillariophyta</taxon>
        <taxon>Mediophyceae</taxon>
        <taxon>Biddulphiophycidae</taxon>
        <taxon>Eupodiscales</taxon>
        <taxon>Parodontellaceae</taxon>
        <taxon>Trieres</taxon>
    </lineage>
</organism>
<reference key="1">
    <citation type="journal article" date="1995" name="Plant Mol. Biol. Rep.">
        <title>The chloroplast genome of a chlorophyll a+c-containing alga, Odontella sinensis.</title>
        <authorList>
            <person name="Kowallik K.V."/>
            <person name="Stoebe B."/>
            <person name="Schaffran I."/>
            <person name="Kroth-Pancic P."/>
            <person name="Freier U."/>
        </authorList>
    </citation>
    <scope>NUCLEOTIDE SEQUENCE [LARGE SCALE GENOMIC DNA]</scope>
</reference>
<name>PSAA_TRICV</name>
<dbReference type="EC" id="1.97.1.12" evidence="1"/>
<dbReference type="EMBL" id="Z67753">
    <property type="protein sequence ID" value="CAA91750.1"/>
    <property type="molecule type" value="Genomic_DNA"/>
</dbReference>
<dbReference type="PIR" id="S78377">
    <property type="entry name" value="S78377"/>
</dbReference>
<dbReference type="RefSeq" id="NP_043718.1">
    <property type="nucleotide sequence ID" value="NC_001713.1"/>
</dbReference>
<dbReference type="SMR" id="P49479"/>
<dbReference type="GeneID" id="801690"/>
<dbReference type="GO" id="GO:0009535">
    <property type="term" value="C:chloroplast thylakoid membrane"/>
    <property type="evidence" value="ECO:0007669"/>
    <property type="project" value="UniProtKB-SubCell"/>
</dbReference>
<dbReference type="GO" id="GO:0009522">
    <property type="term" value="C:photosystem I"/>
    <property type="evidence" value="ECO:0007669"/>
    <property type="project" value="UniProtKB-KW"/>
</dbReference>
<dbReference type="GO" id="GO:0051539">
    <property type="term" value="F:4 iron, 4 sulfur cluster binding"/>
    <property type="evidence" value="ECO:0007669"/>
    <property type="project" value="UniProtKB-KW"/>
</dbReference>
<dbReference type="GO" id="GO:0016168">
    <property type="term" value="F:chlorophyll binding"/>
    <property type="evidence" value="ECO:0007669"/>
    <property type="project" value="UniProtKB-KW"/>
</dbReference>
<dbReference type="GO" id="GO:0009055">
    <property type="term" value="F:electron transfer activity"/>
    <property type="evidence" value="ECO:0007669"/>
    <property type="project" value="UniProtKB-UniRule"/>
</dbReference>
<dbReference type="GO" id="GO:0000287">
    <property type="term" value="F:magnesium ion binding"/>
    <property type="evidence" value="ECO:0007669"/>
    <property type="project" value="UniProtKB-UniRule"/>
</dbReference>
<dbReference type="GO" id="GO:0016491">
    <property type="term" value="F:oxidoreductase activity"/>
    <property type="evidence" value="ECO:0007669"/>
    <property type="project" value="UniProtKB-KW"/>
</dbReference>
<dbReference type="GO" id="GO:0015979">
    <property type="term" value="P:photosynthesis"/>
    <property type="evidence" value="ECO:0007669"/>
    <property type="project" value="UniProtKB-UniRule"/>
</dbReference>
<dbReference type="Gene3D" id="1.20.1130.10">
    <property type="entry name" value="Photosystem I PsaA/PsaB"/>
    <property type="match status" value="1"/>
</dbReference>
<dbReference type="HAMAP" id="MF_00458">
    <property type="entry name" value="PSI_PsaA"/>
    <property type="match status" value="1"/>
</dbReference>
<dbReference type="InterPro" id="IPR006243">
    <property type="entry name" value="PSI_PsaA"/>
</dbReference>
<dbReference type="InterPro" id="IPR001280">
    <property type="entry name" value="PSI_PsaA/B"/>
</dbReference>
<dbReference type="InterPro" id="IPR020586">
    <property type="entry name" value="PSI_PsaA/B_CS"/>
</dbReference>
<dbReference type="InterPro" id="IPR036408">
    <property type="entry name" value="PSI_PsaA/B_sf"/>
</dbReference>
<dbReference type="NCBIfam" id="TIGR01335">
    <property type="entry name" value="psaA"/>
    <property type="match status" value="1"/>
</dbReference>
<dbReference type="PANTHER" id="PTHR30128">
    <property type="entry name" value="OUTER MEMBRANE PROTEIN, OMPA-RELATED"/>
    <property type="match status" value="1"/>
</dbReference>
<dbReference type="PANTHER" id="PTHR30128:SF19">
    <property type="entry name" value="PHOTOSYSTEM I P700 CHLOROPHYLL A APOPROTEIN A1-RELATED"/>
    <property type="match status" value="1"/>
</dbReference>
<dbReference type="Pfam" id="PF00223">
    <property type="entry name" value="PsaA_PsaB"/>
    <property type="match status" value="1"/>
</dbReference>
<dbReference type="PIRSF" id="PIRSF002905">
    <property type="entry name" value="PSI_A"/>
    <property type="match status" value="1"/>
</dbReference>
<dbReference type="PRINTS" id="PR00257">
    <property type="entry name" value="PHOTSYSPSAAB"/>
</dbReference>
<dbReference type="SUPFAM" id="SSF81558">
    <property type="entry name" value="Photosystem I subunits PsaA/PsaB"/>
    <property type="match status" value="1"/>
</dbReference>
<dbReference type="PROSITE" id="PS00419">
    <property type="entry name" value="PHOTOSYSTEM_I_PSAAB"/>
    <property type="match status" value="1"/>
</dbReference>
<gene>
    <name evidence="1" type="primary">psaA</name>
</gene>
<proteinExistence type="inferred from homology"/>
<keyword id="KW-0004">4Fe-4S</keyword>
<keyword id="KW-0148">Chlorophyll</keyword>
<keyword id="KW-0150">Chloroplast</keyword>
<keyword id="KW-0157">Chromophore</keyword>
<keyword id="KW-0249">Electron transport</keyword>
<keyword id="KW-0408">Iron</keyword>
<keyword id="KW-0411">Iron-sulfur</keyword>
<keyword id="KW-0460">Magnesium</keyword>
<keyword id="KW-0472">Membrane</keyword>
<keyword id="KW-0479">Metal-binding</keyword>
<keyword id="KW-0560">Oxidoreductase</keyword>
<keyword id="KW-0602">Photosynthesis</keyword>
<keyword id="KW-0603">Photosystem I</keyword>
<keyword id="KW-0934">Plastid</keyword>
<keyword id="KW-0793">Thylakoid</keyword>
<keyword id="KW-0812">Transmembrane</keyword>
<keyword id="KW-1133">Transmembrane helix</keyword>
<keyword id="KW-0813">Transport</keyword>
<feature type="chain" id="PRO_0000088563" description="Photosystem I P700 chlorophyll a apoprotein A1">
    <location>
        <begin position="1"/>
        <end position="752"/>
    </location>
</feature>
<feature type="transmembrane region" description="Helical; Name=I" evidence="1">
    <location>
        <begin position="73"/>
        <end position="96"/>
    </location>
</feature>
<feature type="transmembrane region" description="Helical; Name=II" evidence="1">
    <location>
        <begin position="159"/>
        <end position="182"/>
    </location>
</feature>
<feature type="transmembrane region" description="Helical; Name=III" evidence="1">
    <location>
        <begin position="198"/>
        <end position="222"/>
    </location>
</feature>
<feature type="transmembrane region" description="Helical; Name=IV" evidence="1">
    <location>
        <begin position="294"/>
        <end position="312"/>
    </location>
</feature>
<feature type="transmembrane region" description="Helical; Name=V" evidence="1">
    <location>
        <begin position="349"/>
        <end position="372"/>
    </location>
</feature>
<feature type="transmembrane region" description="Helical; Name=VI" evidence="1">
    <location>
        <begin position="388"/>
        <end position="414"/>
    </location>
</feature>
<feature type="transmembrane region" description="Helical; Name=VII" evidence="1">
    <location>
        <begin position="436"/>
        <end position="458"/>
    </location>
</feature>
<feature type="transmembrane region" description="Helical; Name=VIII" evidence="1">
    <location>
        <begin position="533"/>
        <end position="551"/>
    </location>
</feature>
<feature type="transmembrane region" description="Helical; Name=IX" evidence="1">
    <location>
        <begin position="591"/>
        <end position="612"/>
    </location>
</feature>
<feature type="transmembrane region" description="Helical; Name=X" evidence="1">
    <location>
        <begin position="666"/>
        <end position="688"/>
    </location>
</feature>
<feature type="transmembrane region" description="Helical; Name=XI" evidence="1">
    <location>
        <begin position="726"/>
        <end position="746"/>
    </location>
</feature>
<feature type="binding site" evidence="1">
    <location>
        <position position="575"/>
    </location>
    <ligand>
        <name>[4Fe-4S] cluster</name>
        <dbReference type="ChEBI" id="CHEBI:49883"/>
        <note>ligand shared between dimeric partners</note>
    </ligand>
</feature>
<feature type="binding site" evidence="1">
    <location>
        <position position="584"/>
    </location>
    <ligand>
        <name>[4Fe-4S] cluster</name>
        <dbReference type="ChEBI" id="CHEBI:49883"/>
        <note>ligand shared between dimeric partners</note>
    </ligand>
</feature>
<feature type="binding site" description="axial binding residue" evidence="1">
    <location>
        <position position="677"/>
    </location>
    <ligand>
        <name>chlorophyll a'</name>
        <dbReference type="ChEBI" id="CHEBI:189419"/>
        <label>A1</label>
    </ligand>
    <ligandPart>
        <name>Mg</name>
        <dbReference type="ChEBI" id="CHEBI:25107"/>
    </ligandPart>
</feature>
<feature type="binding site" description="axial binding residue" evidence="1">
    <location>
        <position position="685"/>
    </location>
    <ligand>
        <name>chlorophyll a</name>
        <dbReference type="ChEBI" id="CHEBI:58416"/>
        <label>A3</label>
    </ligand>
    <ligandPart>
        <name>Mg</name>
        <dbReference type="ChEBI" id="CHEBI:25107"/>
    </ligandPart>
</feature>
<feature type="binding site" evidence="1">
    <location>
        <position position="693"/>
    </location>
    <ligand>
        <name>chlorophyll a</name>
        <dbReference type="ChEBI" id="CHEBI:58416"/>
        <label>A3</label>
    </ligand>
</feature>
<feature type="binding site" evidence="1">
    <location>
        <position position="694"/>
    </location>
    <ligand>
        <name>phylloquinone</name>
        <dbReference type="ChEBI" id="CHEBI:18067"/>
        <label>A</label>
    </ligand>
</feature>
<sequence length="752" mass="83710">MAISSTERRAKNVQIFVEKDAVETSFAKWAQPGHFSRTLAKGPKTTTWIWNLHADAHDFDSQTSSLEEVSRKIFSAHFGQLAVIFLWISGMHFHGAYFSNYSAWLSDPISIKQSSQVVWPIVGQEILNADVGGNFQGVQTTSGWFQMWRAEGITSEVELYWIAIGGLIMSALMLFAGWFHYHKAAPKLEWFQNAESMMNHHLAGLLGLGCLSWSGHQIHIALPINKLLDAGVAPQEIPLPHEFLINRELMAQLYPSFNKGLAPFFSGQWGEYSDFLTFKGGLNPVTGGLWLSDIAHHHLALSVLFIFAGHMYRTNWGIGHSMKEILEAHKGPFTGEGHKGLYEILTTSWHAQLAINLAMMGSLSIIVAHHMYAMPPYPYIATDYATQLSLFTHHMWIGGFCVVGGAAHGAIFMVRDYTPANNYNNLLDRVLRHRDAIISHLNWVCIFLGCHSFGLYIHNDTMRALGRPQDMFSDKAIQLQPIFAQWVQNIHLLAPGTTAPNALATTSYAFGGDVVEVGGKIAMMPIKLGTADFMVHHIHAFTIHVTVLILLKGVLYARSSKLIPDKANLGFRFPCDGPGRGGTCQSSSWDHVFLGLFWMYNSISVVIFHFSWKMQSDVWGTITPDGNISHITGGNFAQSSITINGWLRDFLWSQASQVIQSYGSASSAYGLIFLGAHFIWAFSLMFLFSGRGYWQELIESIVWAHNKLNFAPAIQPRALSITQGRAVGLAHYLLGGIGTTWSFFLARAISIT</sequence>
<accession>P49479</accession>